<comment type="function">
    <text evidence="7 9 10">Inward rectifier potassium channels are characterized by a greater tendency to allow potassium to flow into the cell rather than out of it. Their voltage dependence is regulated by the concentration of extracellular potassium; as external potassium is raised, the voltage range of the channel opening shifts to more positive voltages. The inward rectification is mainly due to the blockage of outward current by internal magnesium. This channel is activated by internal ATP and can be blocked by external barium. In the kidney, probably plays a major role in potassium homeostasis.</text>
</comment>
<comment type="function">
    <molecule>Isoform B</molecule>
    <text evidence="6 8">Inward rectifier potassium channels are characterized by a greater tendency to allow potassium to flow into the cell rather than out of it. Their voltage dependence is regulated by the concentration of extracellular potassium; as external potassium is raised, the voltage range of the channel opening shifts to more positive voltages.</text>
</comment>
<comment type="function">
    <molecule>Isoform E</molecule>
    <text evidence="6">Inward rectifier potassium channels are characterized by a greater tendency to allow potassium to flow into the cell rather than out of it. Their voltage dependence is regulated by the concentration of extracellular potassium; as external potassium is raised, the voltage range of the channel opening shifts to more positive voltages.</text>
</comment>
<comment type="catalytic activity">
    <reaction evidence="7 9 10">
        <text>K(+)(in) = K(+)(out)</text>
        <dbReference type="Rhea" id="RHEA:29463"/>
        <dbReference type="ChEBI" id="CHEBI:29103"/>
    </reaction>
</comment>
<comment type="catalytic activity">
    <molecule>Isoform B</molecule>
    <reaction evidence="6 8">
        <text>K(+)(in) = K(+)(out)</text>
        <dbReference type="Rhea" id="RHEA:29463"/>
        <dbReference type="ChEBI" id="CHEBI:29103"/>
    </reaction>
</comment>
<comment type="catalytic activity">
    <molecule>Isoform E</molecule>
    <reaction evidence="6">
        <text>K(+)(in) = K(+)(out)</text>
        <dbReference type="Rhea" id="RHEA:29463"/>
        <dbReference type="ChEBI" id="CHEBI:29103"/>
    </reaction>
</comment>
<comment type="activity regulation">
    <text evidence="3 10">Inhibited by WNK3 (By similarity). Activated by phosphatidylinositol 4,5 biphosphate (PtdIns(4,5)P2) (PubMed:9486652).</text>
</comment>
<comment type="subunit">
    <text evidence="3">Interacts with SGK1 and SLC9A3R2/NHERF2.</text>
</comment>
<comment type="subcellular location">
    <subcellularLocation>
        <location evidence="3">Cell membrane</location>
        <topology evidence="5">Multi-pass membrane protein</topology>
    </subcellularLocation>
    <text evidence="3">Phosphorylation at Ser-44 by SGK1 is necessary for its expression at the cell membrane.</text>
</comment>
<comment type="alternative products">
    <event type="alternative splicing"/>
    <isoform>
        <id>P35560-1</id>
        <name>A</name>
        <sequence type="displayed"/>
    </isoform>
    <isoform>
        <id>P35560-2</id>
        <name>B</name>
        <name>ROMK2</name>
        <sequence type="described" ref="VSP_002799"/>
    </isoform>
    <isoform>
        <id>P35560-3</id>
        <name>C</name>
        <name>ROMK3</name>
        <sequence type="described" ref="VSP_002800"/>
    </isoform>
    <isoform>
        <id>P35560-4</id>
        <name>D</name>
        <name>1.1</name>
        <name>ROMK1.1</name>
        <sequence type="described" ref="VSP_002801 VSP_002802"/>
    </isoform>
    <isoform>
        <id>P35560-5</id>
        <name>E</name>
        <name>3.1</name>
        <name>ROMK3.1</name>
        <sequence type="described" ref="VSP_002800 VSP_002801 VSP_002802"/>
    </isoform>
    <isoform>
        <id>P35560-6</id>
        <name>F</name>
        <name>6.1</name>
        <name>ROMK6.1</name>
        <sequence type="described" ref="VSP_002799 VSP_002801 VSP_002802"/>
    </isoform>
</comment>
<comment type="tissue specificity">
    <molecule>Isoform B</molecule>
    <text evidence="6 8">Mainly in kidney (renal cortex, medulla and papilla).</text>
</comment>
<comment type="tissue specificity">
    <molecule>Isoform E</molecule>
    <text evidence="6">Kidney.</text>
</comment>
<comment type="PTM">
    <text evidence="3">Phosphorylation at Ser-44 by SGK1 is necessary for its expression at the cell membrane.</text>
</comment>
<comment type="similarity">
    <text evidence="13">Belongs to the inward rectifier-type potassium channel (TC 1.A.2.1) family. KCNJ1 subfamily.</text>
</comment>
<gene>
    <name type="primary">Kcnj1</name>
    <name type="synonym">Romk1</name>
</gene>
<accession>P35560</accession>
<accession>O88639</accession>
<accession>O88640</accession>
<accession>Q9QUR5</accession>
<reference key="1">
    <citation type="journal article" date="1993" name="Nature">
        <title>Cloning and expression of an inwardly rectifying ATP-regulated potassium channel.</title>
        <authorList>
            <person name="Ho K."/>
            <person name="Nichols C.G."/>
            <person name="Lederer W.J."/>
            <person name="Lytton J."/>
            <person name="Vassilev P.M."/>
            <person name="Kanazirska M.V."/>
            <person name="Hebert S.C."/>
        </authorList>
    </citation>
    <scope>NUCLEOTIDE SEQUENCE [MRNA]</scope>
    <scope>FUNCTION</scope>
    <scope>TRANSPORTER ACTIVITY</scope>
    <source>
        <tissue>Kidney</tissue>
    </source>
</reference>
<reference key="2">
    <citation type="journal article" date="1994" name="Am. J. Physiol.">
        <title>Primary structure and functional properties of an epithelial K channel.</title>
        <authorList>
            <person name="Zhou H."/>
            <person name="Tate S.S."/>
            <person name="Palmer L.G."/>
        </authorList>
    </citation>
    <scope>NUCLEOTIDE SEQUENCE [MRNA] (ISOFORM B)</scope>
    <scope>TISSUE SPECIFICITY (ISOFORM B)</scope>
    <scope>FUNCTION (ISOFORM B)</scope>
    <scope>TRANSPORTER ACTIVITY (ISOFORM B)</scope>
    <source>
        <strain>Sprague-Dawley</strain>
        <tissue>Kidney</tissue>
    </source>
</reference>
<reference key="3">
    <citation type="journal article" date="1999" name="Am. J. Physiol.">
        <title>Splicing of a retained intron within ROMK K+ channel RNA generates a novel set of isoforms in rat kidney.</title>
        <authorList>
            <person name="Beesley A.H."/>
            <person name="Ortega B."/>
            <person name="White S.J."/>
        </authorList>
    </citation>
    <scope>NUCLEOTIDE SEQUENCE [MRNA] (ISOFORMS D; E AND F)</scope>
    <source>
        <strain>Wistar</strain>
        <tissue>Kidney</tissue>
    </source>
</reference>
<reference key="4">
    <citation type="journal article" date="1995" name="Am. J. Physiol.">
        <title>ROMK inwardly rectifying ATP-sensitive K+ channel. II. Cloning and distribution of alternative forms.</title>
        <authorList>
            <person name="Boim M.A."/>
            <person name="Ho K."/>
            <person name="Shuck M.E."/>
            <person name="Bienkowski M.J."/>
            <person name="Block J.H."/>
            <person name="Slightom J.L."/>
            <person name="Yang Y."/>
            <person name="Brenner B.M."/>
            <person name="Hebert S.C."/>
        </authorList>
    </citation>
    <scope>ALTERNATIVE SPLICING (ISOFORMS B AND E)</scope>
    <scope>FUNCTION (ISOFORMS B AND E)</scope>
    <scope>TRANSPORTER ACTIVITY (ISOFORMS B AND E)</scope>
    <scope>TISSUE SPECIFICITY (ISOFORMS B AND E)</scope>
</reference>
<reference key="5">
    <citation type="journal article" date="1997" name="Biochem. Biophys. Res. Commun.">
        <title>Mutations in the ROMK gene in antenatal Bartter syndrome are associated with impaired K+ channel function.</title>
        <authorList>
            <person name="Derst C."/>
            <person name="Konrad M."/>
            <person name="Koeckerling A."/>
            <person name="Karolyi L."/>
            <person name="Deschenes G."/>
            <person name="Daut J."/>
            <person name="Karschin A."/>
            <person name="Seyberth H.W."/>
        </authorList>
    </citation>
    <scope>FUNCTION</scope>
    <scope>TRANSPORTER ACTIVITY</scope>
</reference>
<reference key="6">
    <citation type="journal article" date="1998" name="Nature">
        <title>Direct activation of inward rectifier potassium channels by PIP2 and its stabilization by Gbetagamma.</title>
        <authorList>
            <person name="Huang C.L."/>
            <person name="Feng S."/>
            <person name="Hilgemann D.W."/>
        </authorList>
    </citation>
    <scope>FUNCTION</scope>
    <scope>TRANSPORTER ACTIVITY</scope>
    <scope>ACTIVITY REGULATION</scope>
    <scope>PIP2-BINDING REGION</scope>
    <scope>MUTAGENESIS OF ARG-188</scope>
</reference>
<organism>
    <name type="scientific">Rattus norvegicus</name>
    <name type="common">Rat</name>
    <dbReference type="NCBI Taxonomy" id="10116"/>
    <lineage>
        <taxon>Eukaryota</taxon>
        <taxon>Metazoa</taxon>
        <taxon>Chordata</taxon>
        <taxon>Craniata</taxon>
        <taxon>Vertebrata</taxon>
        <taxon>Euteleostomi</taxon>
        <taxon>Mammalia</taxon>
        <taxon>Eutheria</taxon>
        <taxon>Euarchontoglires</taxon>
        <taxon>Glires</taxon>
        <taxon>Rodentia</taxon>
        <taxon>Myomorpha</taxon>
        <taxon>Muroidea</taxon>
        <taxon>Muridae</taxon>
        <taxon>Murinae</taxon>
        <taxon>Rattus</taxon>
    </lineage>
</organism>
<sequence length="391" mass="44963">MGASERSVFRVLIRALTERMFKHLRRWFITHIFGRSRQRARLVSKEGRCNIEFGNVDAQSRFIFFVDIWTTVLDLKWRYKMTVFITAFLGSWFLFGLLWYVVAYVHKDLPEFYPPDNRTPCVENINGMTSAFLFSLETQVTIGYGFRFVTEQCATAIFLLIFQSILGVIINSFMCGAILAKISRPKKRAKTITFSKNAVISKRGGKLCLLIRVANLRKSLLIGSHIYGKLLKTTITPEGETIILDQTNINFVVDAGNENLFFISPLTIYHIIDHNSPFFHMAAETLSQQDFELVVFLDGTVESTSATCQVRTSYVPEEVLWGYRFVPIVSKTKEGKYRVDFHNFGKTVEVETPHCAMCLYNEKDARARMKRGYDNPNFVLSEVDETDDTQM</sequence>
<dbReference type="EMBL" id="X72341">
    <property type="protein sequence ID" value="CAA51068.1"/>
    <property type="molecule type" value="mRNA"/>
</dbReference>
<dbReference type="EMBL" id="L29403">
    <property type="protein sequence ID" value="AAA50378.1"/>
    <property type="molecule type" value="mRNA"/>
</dbReference>
<dbReference type="EMBL" id="S69385">
    <property type="protein sequence ID" value="AAB30553.1"/>
    <property type="molecule type" value="mRNA"/>
</dbReference>
<dbReference type="EMBL" id="AF081365">
    <property type="protein sequence ID" value="AAC34443.1"/>
    <property type="molecule type" value="mRNA"/>
</dbReference>
<dbReference type="EMBL" id="AF081366">
    <property type="protein sequence ID" value="AAC34444.1"/>
    <property type="molecule type" value="mRNA"/>
</dbReference>
<dbReference type="EMBL" id="AF081367">
    <property type="protein sequence ID" value="AAC34445.1"/>
    <property type="molecule type" value="mRNA"/>
</dbReference>
<dbReference type="EMBL" id="AF081368">
    <property type="protein sequence ID" value="AAC34446.1"/>
    <property type="molecule type" value="mRNA"/>
</dbReference>
<dbReference type="PIR" id="S30046">
    <property type="entry name" value="S30046"/>
</dbReference>
<dbReference type="SMR" id="P35560"/>
<dbReference type="BioGRID" id="246676">
    <property type="interactions" value="1"/>
</dbReference>
<dbReference type="FunCoup" id="P35560">
    <property type="interactions" value="4"/>
</dbReference>
<dbReference type="STRING" id="10116.ENSRNOP00000070813"/>
<dbReference type="BindingDB" id="P35560"/>
<dbReference type="ChEMBL" id="CHEMBL2146350"/>
<dbReference type="GuidetoPHARMACOLOGY" id="429"/>
<dbReference type="GlyCosmos" id="P35560">
    <property type="glycosylation" value="1 site, No reported glycans"/>
</dbReference>
<dbReference type="GlyGen" id="P35560">
    <property type="glycosylation" value="1 site"/>
</dbReference>
<dbReference type="iPTMnet" id="P35560"/>
<dbReference type="PhosphoSitePlus" id="P35560"/>
<dbReference type="PaxDb" id="10116-ENSRNOP00000047576"/>
<dbReference type="AGR" id="RGD:2957"/>
<dbReference type="RGD" id="2957">
    <property type="gene designation" value="Kcnj1"/>
</dbReference>
<dbReference type="eggNOG" id="KOG3827">
    <property type="taxonomic scope" value="Eukaryota"/>
</dbReference>
<dbReference type="InParanoid" id="P35560"/>
<dbReference type="PhylomeDB" id="P35560"/>
<dbReference type="Reactome" id="R-RNO-1296067">
    <property type="pathway name" value="Potassium transport channels"/>
</dbReference>
<dbReference type="PRO" id="PR:P35560"/>
<dbReference type="Proteomes" id="UP000002494">
    <property type="component" value="Unplaced"/>
</dbReference>
<dbReference type="GO" id="GO:0034702">
    <property type="term" value="C:monoatomic ion channel complex"/>
    <property type="evidence" value="ECO:0007669"/>
    <property type="project" value="UniProtKB-KW"/>
</dbReference>
<dbReference type="GO" id="GO:0005886">
    <property type="term" value="C:plasma membrane"/>
    <property type="evidence" value="ECO:0000266"/>
    <property type="project" value="RGD"/>
</dbReference>
<dbReference type="GO" id="GO:0005524">
    <property type="term" value="F:ATP binding"/>
    <property type="evidence" value="ECO:0000314"/>
    <property type="project" value="ARUK-UCL"/>
</dbReference>
<dbReference type="GO" id="GO:0015272">
    <property type="term" value="F:ATP-activated inward rectifier potassium channel activity"/>
    <property type="evidence" value="ECO:0000314"/>
    <property type="project" value="UniProtKB"/>
</dbReference>
<dbReference type="GO" id="GO:0005242">
    <property type="term" value="F:inward rectifier potassium channel activity"/>
    <property type="evidence" value="ECO:0000314"/>
    <property type="project" value="UniProtKB"/>
</dbReference>
<dbReference type="GO" id="GO:0042277">
    <property type="term" value="F:peptide binding"/>
    <property type="evidence" value="ECO:0000314"/>
    <property type="project" value="RGD"/>
</dbReference>
<dbReference type="GO" id="GO:0005546">
    <property type="term" value="F:phosphatidylinositol-4,5-bisphosphate binding"/>
    <property type="evidence" value="ECO:0000314"/>
    <property type="project" value="UniProtKB"/>
</dbReference>
<dbReference type="GO" id="GO:0005267">
    <property type="term" value="F:potassium channel activity"/>
    <property type="evidence" value="ECO:0000266"/>
    <property type="project" value="RGD"/>
</dbReference>
<dbReference type="GO" id="GO:0030955">
    <property type="term" value="F:potassium ion binding"/>
    <property type="evidence" value="ECO:0000315"/>
    <property type="project" value="RGD"/>
</dbReference>
<dbReference type="GO" id="GO:0071286">
    <property type="term" value="P:cellular response to magnesium ion"/>
    <property type="evidence" value="ECO:0000314"/>
    <property type="project" value="RGD"/>
</dbReference>
<dbReference type="GO" id="GO:0072359">
    <property type="term" value="P:circulatory system development"/>
    <property type="evidence" value="ECO:0000266"/>
    <property type="project" value="RGD"/>
</dbReference>
<dbReference type="GO" id="GO:0010467">
    <property type="term" value="P:gene expression"/>
    <property type="evidence" value="ECO:0000266"/>
    <property type="project" value="RGD"/>
</dbReference>
<dbReference type="GO" id="GO:0001822">
    <property type="term" value="P:kidney development"/>
    <property type="evidence" value="ECO:0000266"/>
    <property type="project" value="RGD"/>
</dbReference>
<dbReference type="GO" id="GO:0043066">
    <property type="term" value="P:negative regulation of apoptotic process"/>
    <property type="evidence" value="ECO:0000315"/>
    <property type="project" value="RGD"/>
</dbReference>
<dbReference type="GO" id="GO:0009791">
    <property type="term" value="P:post-embryonic development"/>
    <property type="evidence" value="ECO:0000266"/>
    <property type="project" value="RGD"/>
</dbReference>
<dbReference type="GO" id="GO:1990573">
    <property type="term" value="P:potassium ion import across plasma membrane"/>
    <property type="evidence" value="ECO:0000315"/>
    <property type="project" value="UniProtKB"/>
</dbReference>
<dbReference type="GO" id="GO:0006813">
    <property type="term" value="P:potassium ion transport"/>
    <property type="evidence" value="ECO:0000314"/>
    <property type="project" value="RGD"/>
</dbReference>
<dbReference type="GO" id="GO:0034765">
    <property type="term" value="P:regulation of monoatomic ion transmembrane transport"/>
    <property type="evidence" value="ECO:0000318"/>
    <property type="project" value="GO_Central"/>
</dbReference>
<dbReference type="GO" id="GO:0070294">
    <property type="term" value="P:renal sodium ion absorption"/>
    <property type="evidence" value="ECO:0000266"/>
    <property type="project" value="RGD"/>
</dbReference>
<dbReference type="GO" id="GO:0035864">
    <property type="term" value="P:response to potassium ion"/>
    <property type="evidence" value="ECO:0000270"/>
    <property type="project" value="RGD"/>
</dbReference>
<dbReference type="GO" id="GO:0001894">
    <property type="term" value="P:tissue homeostasis"/>
    <property type="evidence" value="ECO:0000266"/>
    <property type="project" value="RGD"/>
</dbReference>
<dbReference type="FunFam" id="1.10.287.70:FF:000036">
    <property type="entry name" value="ATP-sensitive inward rectifier potassium channel 1"/>
    <property type="match status" value="1"/>
</dbReference>
<dbReference type="FunFam" id="2.60.40.1400:FF:000002">
    <property type="entry name" value="ATP-sensitive inward rectifier potassium channel 1"/>
    <property type="match status" value="1"/>
</dbReference>
<dbReference type="Gene3D" id="1.10.287.70">
    <property type="match status" value="1"/>
</dbReference>
<dbReference type="Gene3D" id="2.60.40.1400">
    <property type="entry name" value="G protein-activated inward rectifier potassium channel 1"/>
    <property type="match status" value="1"/>
</dbReference>
<dbReference type="InterPro" id="IPR014756">
    <property type="entry name" value="Ig_E-set"/>
</dbReference>
<dbReference type="InterPro" id="IPR041647">
    <property type="entry name" value="IRK_C"/>
</dbReference>
<dbReference type="InterPro" id="IPR016449">
    <property type="entry name" value="K_chnl_inward-rec_Kir"/>
</dbReference>
<dbReference type="InterPro" id="IPR003268">
    <property type="entry name" value="K_chnl_inward-rec_Kir1.1"/>
</dbReference>
<dbReference type="InterPro" id="IPR013518">
    <property type="entry name" value="K_chnl_inward-rec_Kir_cyto"/>
</dbReference>
<dbReference type="InterPro" id="IPR040445">
    <property type="entry name" value="Kir_TM"/>
</dbReference>
<dbReference type="PANTHER" id="PTHR11767:SF6">
    <property type="entry name" value="ATP-SENSITIVE INWARD RECTIFIER POTASSIUM CHANNEL 1"/>
    <property type="match status" value="1"/>
</dbReference>
<dbReference type="PANTHER" id="PTHR11767">
    <property type="entry name" value="INWARD RECTIFIER POTASSIUM CHANNEL"/>
    <property type="match status" value="1"/>
</dbReference>
<dbReference type="Pfam" id="PF01007">
    <property type="entry name" value="IRK"/>
    <property type="match status" value="1"/>
</dbReference>
<dbReference type="Pfam" id="PF17655">
    <property type="entry name" value="IRK_C"/>
    <property type="match status" value="1"/>
</dbReference>
<dbReference type="PIRSF" id="PIRSF005465">
    <property type="entry name" value="GIRK_kir"/>
    <property type="match status" value="1"/>
</dbReference>
<dbReference type="PRINTS" id="PR01321">
    <property type="entry name" value="KIR11CHANNEL"/>
</dbReference>
<dbReference type="PRINTS" id="PR01320">
    <property type="entry name" value="KIRCHANNEL"/>
</dbReference>
<dbReference type="SUPFAM" id="SSF81296">
    <property type="entry name" value="E set domains"/>
    <property type="match status" value="1"/>
</dbReference>
<dbReference type="SUPFAM" id="SSF81324">
    <property type="entry name" value="Voltage-gated potassium channels"/>
    <property type="match status" value="1"/>
</dbReference>
<evidence type="ECO:0000250" key="1"/>
<evidence type="ECO:0000250" key="2">
    <source>
        <dbReference type="UniProtKB" id="O00180"/>
    </source>
</evidence>
<evidence type="ECO:0000250" key="3">
    <source>
        <dbReference type="UniProtKB" id="P48048"/>
    </source>
</evidence>
<evidence type="ECO:0000250" key="4">
    <source>
        <dbReference type="UniProtKB" id="Q63472"/>
    </source>
</evidence>
<evidence type="ECO:0000255" key="5"/>
<evidence type="ECO:0000269" key="6">
    <source>
    </source>
</evidence>
<evidence type="ECO:0000269" key="7">
    <source>
    </source>
</evidence>
<evidence type="ECO:0000269" key="8">
    <source>
    </source>
</evidence>
<evidence type="ECO:0000269" key="9">
    <source>
    </source>
</evidence>
<evidence type="ECO:0000269" key="10">
    <source>
    </source>
</evidence>
<evidence type="ECO:0000303" key="11">
    <source>
    </source>
</evidence>
<evidence type="ECO:0000303" key="12">
    <source>
    </source>
</evidence>
<evidence type="ECO:0000305" key="13"/>
<name>KCNJ1_RAT</name>
<feature type="chain" id="PRO_0000154919" description="ATP-sensitive inward rectifier potassium channel 1">
    <location>
        <begin position="1"/>
        <end position="391"/>
    </location>
</feature>
<feature type="topological domain" description="Cytoplasmic" evidence="2">
    <location>
        <begin position="1"/>
        <end position="77"/>
    </location>
</feature>
<feature type="transmembrane region" description="Helical; Name=M1" evidence="1">
    <location>
        <begin position="78"/>
        <end position="102"/>
    </location>
</feature>
<feature type="topological domain" description="Extracellular" evidence="2">
    <location>
        <begin position="103"/>
        <end position="127"/>
    </location>
</feature>
<feature type="intramembrane region" description="Helical; Pore-forming; Name=H5" evidence="1">
    <location>
        <begin position="128"/>
        <end position="139"/>
    </location>
</feature>
<feature type="intramembrane region" description="Pore-forming" evidence="1">
    <location>
        <begin position="140"/>
        <end position="146"/>
    </location>
</feature>
<feature type="topological domain" description="Extracellular" evidence="2">
    <location>
        <begin position="147"/>
        <end position="155"/>
    </location>
</feature>
<feature type="transmembrane region" description="Helical; Name=M2" evidence="1">
    <location>
        <begin position="156"/>
        <end position="177"/>
    </location>
</feature>
<feature type="topological domain" description="Cytoplasmic" evidence="2">
    <location>
        <begin position="178"/>
        <end position="391"/>
    </location>
</feature>
<feature type="region of interest" description="Polyphosphoinositide (PIP2)-binding" evidence="10">
    <location>
        <begin position="180"/>
        <end position="207"/>
    </location>
</feature>
<feature type="short sequence motif" description="Selectivity filter" evidence="4">
    <location>
        <begin position="141"/>
        <end position="146"/>
    </location>
</feature>
<feature type="binding site" evidence="5">
    <location>
        <begin position="223"/>
        <end position="230"/>
    </location>
    <ligand>
        <name>ATP</name>
        <dbReference type="ChEBI" id="CHEBI:30616"/>
    </ligand>
</feature>
<feature type="site" description="Role in the control of polyamine-mediated channel gating and in the blocking by intracellular magnesium" evidence="1">
    <location>
        <position position="171"/>
    </location>
</feature>
<feature type="modified residue" description="Phosphoserine; by SGK1" evidence="3">
    <location>
        <position position="44"/>
    </location>
</feature>
<feature type="glycosylation site" description="N-linked (GlcNAc...) asparagine" evidence="5">
    <location>
        <position position="117"/>
    </location>
</feature>
<feature type="splice variant" id="VSP_002799" description="In isoform B and isoform F." evidence="11 12">
    <location>
        <begin position="1"/>
        <end position="19"/>
    </location>
</feature>
<feature type="splice variant" id="VSP_002800" description="In isoform C and isoform E." evidence="11">
    <original>MGASERSVFRVL</original>
    <variation>MVSELSIPSIPTGVAGLSK</variation>
    <location>
        <begin position="1"/>
        <end position="12"/>
    </location>
</feature>
<feature type="splice variant" id="VSP_002801" description="In isoform D, isoform E and isoform F." evidence="11">
    <original>YKMTVFITAFLGSWFLFGLLWYVVAYVHKDLPEFYPPDNRTPCVEN</original>
    <variation>DSSDHRLRIQVCDRTVRHCHFPAYLPVYSWSDHQFLHVWCHFSQDL</variation>
    <location>
        <begin position="79"/>
        <end position="124"/>
    </location>
</feature>
<feature type="splice variant" id="VSP_002802" description="In isoform D, isoform E and isoform F." evidence="11">
    <location>
        <begin position="125"/>
        <end position="391"/>
    </location>
</feature>
<feature type="mutagenesis site" description="Reduced polyphosphoinositide (PIP2)-binding." evidence="10">
    <original>R</original>
    <variation>Q</variation>
    <location>
        <position position="188"/>
    </location>
</feature>
<keyword id="KW-0025">Alternative splicing</keyword>
<keyword id="KW-0067">ATP-binding</keyword>
<keyword id="KW-1003">Cell membrane</keyword>
<keyword id="KW-0325">Glycoprotein</keyword>
<keyword id="KW-0407">Ion channel</keyword>
<keyword id="KW-0406">Ion transport</keyword>
<keyword id="KW-0472">Membrane</keyword>
<keyword id="KW-0547">Nucleotide-binding</keyword>
<keyword id="KW-0597">Phosphoprotein</keyword>
<keyword id="KW-0630">Potassium</keyword>
<keyword id="KW-0633">Potassium transport</keyword>
<keyword id="KW-1185">Reference proteome</keyword>
<keyword id="KW-0812">Transmembrane</keyword>
<keyword id="KW-1133">Transmembrane helix</keyword>
<keyword id="KW-0813">Transport</keyword>
<keyword id="KW-0851">Voltage-gated channel</keyword>
<proteinExistence type="evidence at protein level"/>
<protein>
    <recommendedName>
        <fullName>ATP-sensitive inward rectifier potassium channel 1</fullName>
    </recommendedName>
    <alternativeName>
        <fullName>ATP-regulated potassium channel ROM-K</fullName>
    </alternativeName>
    <alternativeName>
        <fullName>Inward rectifier K(+) channel Kir1.1</fullName>
    </alternativeName>
    <alternativeName>
        <fullName>KAB-1</fullName>
    </alternativeName>
    <alternativeName>
        <fullName>Potassium channel, inwardly rectifying subfamily J member 1</fullName>
    </alternativeName>
</protein>